<name>SUCC_BURP0</name>
<gene>
    <name evidence="1" type="primary">sucC</name>
    <name type="ordered locus">BURPS1106A_0817</name>
</gene>
<dbReference type="EC" id="6.2.1.5" evidence="1"/>
<dbReference type="EMBL" id="CP000572">
    <property type="protein sequence ID" value="ABN89097.1"/>
    <property type="molecule type" value="Genomic_DNA"/>
</dbReference>
<dbReference type="SMR" id="A3NRX7"/>
<dbReference type="KEGG" id="bpl:BURPS1106A_0817"/>
<dbReference type="HOGENOM" id="CLU_037430_0_2_4"/>
<dbReference type="UniPathway" id="UPA00223">
    <property type="reaction ID" value="UER00999"/>
</dbReference>
<dbReference type="Proteomes" id="UP000006738">
    <property type="component" value="Chromosome I"/>
</dbReference>
<dbReference type="GO" id="GO:0005829">
    <property type="term" value="C:cytosol"/>
    <property type="evidence" value="ECO:0007669"/>
    <property type="project" value="TreeGrafter"/>
</dbReference>
<dbReference type="GO" id="GO:0042709">
    <property type="term" value="C:succinate-CoA ligase complex"/>
    <property type="evidence" value="ECO:0007669"/>
    <property type="project" value="TreeGrafter"/>
</dbReference>
<dbReference type="GO" id="GO:0005524">
    <property type="term" value="F:ATP binding"/>
    <property type="evidence" value="ECO:0007669"/>
    <property type="project" value="UniProtKB-UniRule"/>
</dbReference>
<dbReference type="GO" id="GO:0000287">
    <property type="term" value="F:magnesium ion binding"/>
    <property type="evidence" value="ECO:0007669"/>
    <property type="project" value="UniProtKB-UniRule"/>
</dbReference>
<dbReference type="GO" id="GO:0004775">
    <property type="term" value="F:succinate-CoA ligase (ADP-forming) activity"/>
    <property type="evidence" value="ECO:0007669"/>
    <property type="project" value="UniProtKB-UniRule"/>
</dbReference>
<dbReference type="GO" id="GO:0004776">
    <property type="term" value="F:succinate-CoA ligase (GDP-forming) activity"/>
    <property type="evidence" value="ECO:0007669"/>
    <property type="project" value="RHEA"/>
</dbReference>
<dbReference type="GO" id="GO:0006104">
    <property type="term" value="P:succinyl-CoA metabolic process"/>
    <property type="evidence" value="ECO:0007669"/>
    <property type="project" value="TreeGrafter"/>
</dbReference>
<dbReference type="GO" id="GO:0006099">
    <property type="term" value="P:tricarboxylic acid cycle"/>
    <property type="evidence" value="ECO:0007669"/>
    <property type="project" value="UniProtKB-UniRule"/>
</dbReference>
<dbReference type="FunFam" id="3.30.1490.20:FF:000002">
    <property type="entry name" value="Succinate--CoA ligase [ADP-forming] subunit beta"/>
    <property type="match status" value="1"/>
</dbReference>
<dbReference type="FunFam" id="3.30.470.20:FF:000002">
    <property type="entry name" value="Succinate--CoA ligase [ADP-forming] subunit beta"/>
    <property type="match status" value="1"/>
</dbReference>
<dbReference type="FunFam" id="3.40.50.261:FF:000001">
    <property type="entry name" value="Succinate--CoA ligase [ADP-forming] subunit beta"/>
    <property type="match status" value="1"/>
</dbReference>
<dbReference type="Gene3D" id="3.30.1490.20">
    <property type="entry name" value="ATP-grasp fold, A domain"/>
    <property type="match status" value="1"/>
</dbReference>
<dbReference type="Gene3D" id="3.30.470.20">
    <property type="entry name" value="ATP-grasp fold, B domain"/>
    <property type="match status" value="1"/>
</dbReference>
<dbReference type="Gene3D" id="3.40.50.261">
    <property type="entry name" value="Succinyl-CoA synthetase domains"/>
    <property type="match status" value="1"/>
</dbReference>
<dbReference type="HAMAP" id="MF_00558">
    <property type="entry name" value="Succ_CoA_beta"/>
    <property type="match status" value="1"/>
</dbReference>
<dbReference type="InterPro" id="IPR011761">
    <property type="entry name" value="ATP-grasp"/>
</dbReference>
<dbReference type="InterPro" id="IPR013650">
    <property type="entry name" value="ATP-grasp_succ-CoA_synth-type"/>
</dbReference>
<dbReference type="InterPro" id="IPR013815">
    <property type="entry name" value="ATP_grasp_subdomain_1"/>
</dbReference>
<dbReference type="InterPro" id="IPR017866">
    <property type="entry name" value="Succ-CoA_synthase_bsu_CS"/>
</dbReference>
<dbReference type="InterPro" id="IPR005811">
    <property type="entry name" value="SUCC_ACL_C"/>
</dbReference>
<dbReference type="InterPro" id="IPR005809">
    <property type="entry name" value="Succ_CoA_ligase-like_bsu"/>
</dbReference>
<dbReference type="InterPro" id="IPR016102">
    <property type="entry name" value="Succinyl-CoA_synth-like"/>
</dbReference>
<dbReference type="NCBIfam" id="NF001913">
    <property type="entry name" value="PRK00696.1"/>
    <property type="match status" value="1"/>
</dbReference>
<dbReference type="NCBIfam" id="TIGR01016">
    <property type="entry name" value="sucCoAbeta"/>
    <property type="match status" value="1"/>
</dbReference>
<dbReference type="PANTHER" id="PTHR11815:SF10">
    <property type="entry name" value="SUCCINATE--COA LIGASE [GDP-FORMING] SUBUNIT BETA, MITOCHONDRIAL"/>
    <property type="match status" value="1"/>
</dbReference>
<dbReference type="PANTHER" id="PTHR11815">
    <property type="entry name" value="SUCCINYL-COA SYNTHETASE BETA CHAIN"/>
    <property type="match status" value="1"/>
</dbReference>
<dbReference type="Pfam" id="PF08442">
    <property type="entry name" value="ATP-grasp_2"/>
    <property type="match status" value="1"/>
</dbReference>
<dbReference type="Pfam" id="PF00549">
    <property type="entry name" value="Ligase_CoA"/>
    <property type="match status" value="1"/>
</dbReference>
<dbReference type="PIRSF" id="PIRSF001554">
    <property type="entry name" value="SucCS_beta"/>
    <property type="match status" value="1"/>
</dbReference>
<dbReference type="SUPFAM" id="SSF56059">
    <property type="entry name" value="Glutathione synthetase ATP-binding domain-like"/>
    <property type="match status" value="1"/>
</dbReference>
<dbReference type="SUPFAM" id="SSF52210">
    <property type="entry name" value="Succinyl-CoA synthetase domains"/>
    <property type="match status" value="1"/>
</dbReference>
<dbReference type="PROSITE" id="PS50975">
    <property type="entry name" value="ATP_GRASP"/>
    <property type="match status" value="1"/>
</dbReference>
<dbReference type="PROSITE" id="PS01217">
    <property type="entry name" value="SUCCINYL_COA_LIG_3"/>
    <property type="match status" value="1"/>
</dbReference>
<comment type="function">
    <text evidence="1">Succinyl-CoA synthetase functions in the citric acid cycle (TCA), coupling the hydrolysis of succinyl-CoA to the synthesis of either ATP or GTP and thus represents the only step of substrate-level phosphorylation in the TCA. The beta subunit provides nucleotide specificity of the enzyme and binds the substrate succinate, while the binding sites for coenzyme A and phosphate are found in the alpha subunit.</text>
</comment>
<comment type="catalytic activity">
    <reaction evidence="1">
        <text>succinate + ATP + CoA = succinyl-CoA + ADP + phosphate</text>
        <dbReference type="Rhea" id="RHEA:17661"/>
        <dbReference type="ChEBI" id="CHEBI:30031"/>
        <dbReference type="ChEBI" id="CHEBI:30616"/>
        <dbReference type="ChEBI" id="CHEBI:43474"/>
        <dbReference type="ChEBI" id="CHEBI:57287"/>
        <dbReference type="ChEBI" id="CHEBI:57292"/>
        <dbReference type="ChEBI" id="CHEBI:456216"/>
        <dbReference type="EC" id="6.2.1.5"/>
    </reaction>
    <physiologicalReaction direction="right-to-left" evidence="1">
        <dbReference type="Rhea" id="RHEA:17663"/>
    </physiologicalReaction>
</comment>
<comment type="catalytic activity">
    <reaction evidence="1">
        <text>GTP + succinate + CoA = succinyl-CoA + GDP + phosphate</text>
        <dbReference type="Rhea" id="RHEA:22120"/>
        <dbReference type="ChEBI" id="CHEBI:30031"/>
        <dbReference type="ChEBI" id="CHEBI:37565"/>
        <dbReference type="ChEBI" id="CHEBI:43474"/>
        <dbReference type="ChEBI" id="CHEBI:57287"/>
        <dbReference type="ChEBI" id="CHEBI:57292"/>
        <dbReference type="ChEBI" id="CHEBI:58189"/>
    </reaction>
    <physiologicalReaction direction="right-to-left" evidence="1">
        <dbReference type="Rhea" id="RHEA:22122"/>
    </physiologicalReaction>
</comment>
<comment type="cofactor">
    <cofactor evidence="1">
        <name>Mg(2+)</name>
        <dbReference type="ChEBI" id="CHEBI:18420"/>
    </cofactor>
    <text evidence="1">Binds 1 Mg(2+) ion per subunit.</text>
</comment>
<comment type="pathway">
    <text evidence="1">Carbohydrate metabolism; tricarboxylic acid cycle; succinate from succinyl-CoA (ligase route): step 1/1.</text>
</comment>
<comment type="subunit">
    <text evidence="1">Heterotetramer of two alpha and two beta subunits.</text>
</comment>
<comment type="similarity">
    <text evidence="1">Belongs to the succinate/malate CoA ligase beta subunit family.</text>
</comment>
<organism>
    <name type="scientific">Burkholderia pseudomallei (strain 1106a)</name>
    <dbReference type="NCBI Taxonomy" id="357348"/>
    <lineage>
        <taxon>Bacteria</taxon>
        <taxon>Pseudomonadati</taxon>
        <taxon>Pseudomonadota</taxon>
        <taxon>Betaproteobacteria</taxon>
        <taxon>Burkholderiales</taxon>
        <taxon>Burkholderiaceae</taxon>
        <taxon>Burkholderia</taxon>
        <taxon>pseudomallei group</taxon>
    </lineage>
</organism>
<feature type="chain" id="PRO_1000082042" description="Succinate--CoA ligase [ADP-forming] subunit beta">
    <location>
        <begin position="1"/>
        <end position="388"/>
    </location>
</feature>
<feature type="domain" description="ATP-grasp" evidence="1">
    <location>
        <begin position="9"/>
        <end position="244"/>
    </location>
</feature>
<feature type="binding site" evidence="1">
    <location>
        <position position="46"/>
    </location>
    <ligand>
        <name>ATP</name>
        <dbReference type="ChEBI" id="CHEBI:30616"/>
    </ligand>
</feature>
<feature type="binding site" evidence="1">
    <location>
        <begin position="53"/>
        <end position="55"/>
    </location>
    <ligand>
        <name>ATP</name>
        <dbReference type="ChEBI" id="CHEBI:30616"/>
    </ligand>
</feature>
<feature type="binding site" evidence="1">
    <location>
        <position position="99"/>
    </location>
    <ligand>
        <name>ATP</name>
        <dbReference type="ChEBI" id="CHEBI:30616"/>
    </ligand>
</feature>
<feature type="binding site" evidence="1">
    <location>
        <position position="102"/>
    </location>
    <ligand>
        <name>ATP</name>
        <dbReference type="ChEBI" id="CHEBI:30616"/>
    </ligand>
</feature>
<feature type="binding site" evidence="1">
    <location>
        <position position="107"/>
    </location>
    <ligand>
        <name>ATP</name>
        <dbReference type="ChEBI" id="CHEBI:30616"/>
    </ligand>
</feature>
<feature type="binding site" evidence="1">
    <location>
        <position position="199"/>
    </location>
    <ligand>
        <name>Mg(2+)</name>
        <dbReference type="ChEBI" id="CHEBI:18420"/>
    </ligand>
</feature>
<feature type="binding site" evidence="1">
    <location>
        <position position="213"/>
    </location>
    <ligand>
        <name>Mg(2+)</name>
        <dbReference type="ChEBI" id="CHEBI:18420"/>
    </ligand>
</feature>
<feature type="binding site" evidence="1">
    <location>
        <position position="264"/>
    </location>
    <ligand>
        <name>substrate</name>
        <note>ligand shared with subunit alpha</note>
    </ligand>
</feature>
<feature type="binding site" evidence="1">
    <location>
        <begin position="321"/>
        <end position="323"/>
    </location>
    <ligand>
        <name>substrate</name>
        <note>ligand shared with subunit alpha</note>
    </ligand>
</feature>
<sequence>MKIHEYQGKEILRKFGVAVPRGKPAFSVDEAVKVAQELGGPVWVVKAQIHAGGRGKGGGVKVAKSLEQVREYSNQILGMQLKTHQTGPEGQKVNRLLIEEGADIKKELYVGIVIDRVSQKVVVMASSEGGMDIEEVAEKTPEAIHKVAVEPSVGLQDAEADDLAKKIGVPDASIPQAREILKGLYKSFWETDASLAEINPLVLTGDGKVIALDAKFNFDSNALFRHPEIVAYRDLDEEDPAEIEASKFDLAYISLDGNIGCLVNGAGLAMATMDTIKLFGGEPANFLDVGGGATTEKVTEAFKLMLKNPGLKAILVNIFGGIMRCDVIAEGVIAGSKAVNLNVPLVVRMKGTNEDLGKKMLAESGLPIISADSMEEAAQKVVAAAAGK</sequence>
<reference key="1">
    <citation type="journal article" date="2010" name="Genome Biol. Evol.">
        <title>Continuing evolution of Burkholderia mallei through genome reduction and large-scale rearrangements.</title>
        <authorList>
            <person name="Losada L."/>
            <person name="Ronning C.M."/>
            <person name="DeShazer D."/>
            <person name="Woods D."/>
            <person name="Fedorova N."/>
            <person name="Kim H.S."/>
            <person name="Shabalina S.A."/>
            <person name="Pearson T.R."/>
            <person name="Brinkac L."/>
            <person name="Tan P."/>
            <person name="Nandi T."/>
            <person name="Crabtree J."/>
            <person name="Badger J."/>
            <person name="Beckstrom-Sternberg S."/>
            <person name="Saqib M."/>
            <person name="Schutzer S.E."/>
            <person name="Keim P."/>
            <person name="Nierman W.C."/>
        </authorList>
    </citation>
    <scope>NUCLEOTIDE SEQUENCE [LARGE SCALE GENOMIC DNA]</scope>
    <source>
        <strain>1106a</strain>
    </source>
</reference>
<proteinExistence type="inferred from homology"/>
<evidence type="ECO:0000255" key="1">
    <source>
        <dbReference type="HAMAP-Rule" id="MF_00558"/>
    </source>
</evidence>
<keyword id="KW-0067">ATP-binding</keyword>
<keyword id="KW-0436">Ligase</keyword>
<keyword id="KW-0460">Magnesium</keyword>
<keyword id="KW-0479">Metal-binding</keyword>
<keyword id="KW-0547">Nucleotide-binding</keyword>
<keyword id="KW-0816">Tricarboxylic acid cycle</keyword>
<protein>
    <recommendedName>
        <fullName evidence="1">Succinate--CoA ligase [ADP-forming] subunit beta</fullName>
        <ecNumber evidence="1">6.2.1.5</ecNumber>
    </recommendedName>
    <alternativeName>
        <fullName evidence="1">Succinyl-CoA synthetase subunit beta</fullName>
        <shortName evidence="1">SCS-beta</shortName>
    </alternativeName>
</protein>
<accession>A3NRX7</accession>